<keyword id="KW-0150">Chloroplast</keyword>
<keyword id="KW-0240">DNA-directed RNA polymerase</keyword>
<keyword id="KW-0548">Nucleotidyltransferase</keyword>
<keyword id="KW-0934">Plastid</keyword>
<keyword id="KW-0804">Transcription</keyword>
<keyword id="KW-0808">Transferase</keyword>
<reference key="1">
    <citation type="journal article" date="2004" name="DNA Res.">
        <title>Complete nucleotide sequence of the sugarcane (Saccharum officinarum) chloroplast genome: a comparative analysis of four monocot chloroplast genomes.</title>
        <authorList>
            <person name="Asano T."/>
            <person name="Tsudzuki T."/>
            <person name="Takahashi S."/>
            <person name="Shimada H."/>
            <person name="Kadowaki K."/>
        </authorList>
    </citation>
    <scope>NUCLEOTIDE SEQUENCE [LARGE SCALE GENOMIC DNA]</scope>
</reference>
<feature type="chain" id="PRO_0000175492" description="DNA-directed RNA polymerase subunit alpha">
    <location>
        <begin position="1"/>
        <end position="339"/>
    </location>
</feature>
<feature type="region of interest" description="Alpha N-terminal domain (alpha-NTD)" evidence="1">
    <location>
        <begin position="1"/>
        <end position="233"/>
    </location>
</feature>
<feature type="region of interest" description="Alpha C-terminal domain (alpha-CTD)" evidence="1">
    <location>
        <begin position="266"/>
        <end position="339"/>
    </location>
</feature>
<sequence>MVREEITGSTQTLEWKCVESRVDSKRLYYGRFILSPLRKGQADTVGIALRRALLGEIEGTCITRAKFWNVPHEYSTIVGIEESIQEILLNLKEIVLRSNLYGVRDASICVKGPRYITAQDIILPPSVEIVDTTQPIANLREPVDFCIELQIKRDRGYHTELRKNSQDGSYPIDAVFMPVRNVNYSIFSCGNGNEKHEILFLEIWTNGSLTPKEALYEASRNLIDLFLPFIHTEEEGTSFEENKNRLTPPLLTFQKRFTNLKKNKKGIPLNCIFIDQLELPSRTYNCLKRANIHTLLDLLSKTEEDLMRINSFRMEDGKLIWDTLEKHLPIDLPKNKFSL</sequence>
<name>RPOA_SACOF</name>
<dbReference type="EC" id="2.7.7.6" evidence="1"/>
<dbReference type="EMBL" id="AP006714">
    <property type="protein sequence ID" value="BAD27324.1"/>
    <property type="molecule type" value="Genomic_DNA"/>
</dbReference>
<dbReference type="SMR" id="Q6ENT2"/>
<dbReference type="GO" id="GO:0009507">
    <property type="term" value="C:chloroplast"/>
    <property type="evidence" value="ECO:0007669"/>
    <property type="project" value="UniProtKB-SubCell"/>
</dbReference>
<dbReference type="GO" id="GO:0000428">
    <property type="term" value="C:DNA-directed RNA polymerase complex"/>
    <property type="evidence" value="ECO:0007669"/>
    <property type="project" value="UniProtKB-KW"/>
</dbReference>
<dbReference type="GO" id="GO:0005739">
    <property type="term" value="C:mitochondrion"/>
    <property type="evidence" value="ECO:0007669"/>
    <property type="project" value="GOC"/>
</dbReference>
<dbReference type="GO" id="GO:0003677">
    <property type="term" value="F:DNA binding"/>
    <property type="evidence" value="ECO:0007669"/>
    <property type="project" value="UniProtKB-UniRule"/>
</dbReference>
<dbReference type="GO" id="GO:0003899">
    <property type="term" value="F:DNA-directed RNA polymerase activity"/>
    <property type="evidence" value="ECO:0007669"/>
    <property type="project" value="UniProtKB-UniRule"/>
</dbReference>
<dbReference type="GO" id="GO:0046983">
    <property type="term" value="F:protein dimerization activity"/>
    <property type="evidence" value="ECO:0007669"/>
    <property type="project" value="InterPro"/>
</dbReference>
<dbReference type="GO" id="GO:0006351">
    <property type="term" value="P:DNA-templated transcription"/>
    <property type="evidence" value="ECO:0007669"/>
    <property type="project" value="UniProtKB-UniRule"/>
</dbReference>
<dbReference type="CDD" id="cd06928">
    <property type="entry name" value="RNAP_alpha_NTD"/>
    <property type="match status" value="1"/>
</dbReference>
<dbReference type="FunFam" id="1.10.150.20:FF:000021">
    <property type="entry name" value="DNA-directed RNA polymerase subunit alpha"/>
    <property type="match status" value="1"/>
</dbReference>
<dbReference type="FunFam" id="2.170.120.12:FF:000001">
    <property type="entry name" value="DNA-directed RNA polymerase subunit alpha"/>
    <property type="match status" value="1"/>
</dbReference>
<dbReference type="Gene3D" id="1.10.150.20">
    <property type="entry name" value="5' to 3' exonuclease, C-terminal subdomain"/>
    <property type="match status" value="1"/>
</dbReference>
<dbReference type="Gene3D" id="2.170.120.12">
    <property type="entry name" value="DNA-directed RNA polymerase, insert domain"/>
    <property type="match status" value="1"/>
</dbReference>
<dbReference type="Gene3D" id="3.30.1360.10">
    <property type="entry name" value="RNA polymerase, RBP11-like subunit"/>
    <property type="match status" value="1"/>
</dbReference>
<dbReference type="HAMAP" id="MF_00059">
    <property type="entry name" value="RNApol_bact_RpoA"/>
    <property type="match status" value="1"/>
</dbReference>
<dbReference type="InterPro" id="IPR011262">
    <property type="entry name" value="DNA-dir_RNA_pol_insert"/>
</dbReference>
<dbReference type="InterPro" id="IPR011263">
    <property type="entry name" value="DNA-dir_RNA_pol_RpoA/D/Rpb3"/>
</dbReference>
<dbReference type="InterPro" id="IPR011773">
    <property type="entry name" value="DNA-dir_RpoA"/>
</dbReference>
<dbReference type="InterPro" id="IPR036603">
    <property type="entry name" value="RBP11-like"/>
</dbReference>
<dbReference type="InterPro" id="IPR011260">
    <property type="entry name" value="RNAP_asu_C"/>
</dbReference>
<dbReference type="InterPro" id="IPR036643">
    <property type="entry name" value="RNApol_insert_sf"/>
</dbReference>
<dbReference type="NCBIfam" id="TIGR02027">
    <property type="entry name" value="rpoA"/>
    <property type="match status" value="1"/>
</dbReference>
<dbReference type="Pfam" id="PF01000">
    <property type="entry name" value="RNA_pol_A_bac"/>
    <property type="match status" value="1"/>
</dbReference>
<dbReference type="Pfam" id="PF03118">
    <property type="entry name" value="RNA_pol_A_CTD"/>
    <property type="match status" value="1"/>
</dbReference>
<dbReference type="Pfam" id="PF01193">
    <property type="entry name" value="RNA_pol_L"/>
    <property type="match status" value="1"/>
</dbReference>
<dbReference type="SMART" id="SM00662">
    <property type="entry name" value="RPOLD"/>
    <property type="match status" value="1"/>
</dbReference>
<dbReference type="SUPFAM" id="SSF47789">
    <property type="entry name" value="C-terminal domain of RNA polymerase alpha subunit"/>
    <property type="match status" value="1"/>
</dbReference>
<dbReference type="SUPFAM" id="SSF56553">
    <property type="entry name" value="Insert subdomain of RNA polymerase alpha subunit"/>
    <property type="match status" value="1"/>
</dbReference>
<dbReference type="SUPFAM" id="SSF55257">
    <property type="entry name" value="RBP11-like subunits of RNA polymerase"/>
    <property type="match status" value="1"/>
</dbReference>
<proteinExistence type="inferred from homology"/>
<geneLocation type="chloroplast"/>
<gene>
    <name evidence="1" type="primary">rpoA</name>
</gene>
<accession>Q6ENT2</accession>
<comment type="function">
    <text evidence="1">DNA-dependent RNA polymerase catalyzes the transcription of DNA into RNA using the four ribonucleoside triphosphates as substrates.</text>
</comment>
<comment type="catalytic activity">
    <reaction evidence="1">
        <text>RNA(n) + a ribonucleoside 5'-triphosphate = RNA(n+1) + diphosphate</text>
        <dbReference type="Rhea" id="RHEA:21248"/>
        <dbReference type="Rhea" id="RHEA-COMP:14527"/>
        <dbReference type="Rhea" id="RHEA-COMP:17342"/>
        <dbReference type="ChEBI" id="CHEBI:33019"/>
        <dbReference type="ChEBI" id="CHEBI:61557"/>
        <dbReference type="ChEBI" id="CHEBI:140395"/>
        <dbReference type="EC" id="2.7.7.6"/>
    </reaction>
</comment>
<comment type="subunit">
    <text evidence="1">In plastids the minimal PEP RNA polymerase catalytic core is composed of four subunits: alpha, beta, beta', and beta''. When a (nuclear-encoded) sigma factor is associated with the core the holoenzyme is formed, which can initiate transcription.</text>
</comment>
<comment type="subcellular location">
    <subcellularLocation>
        <location>Plastid</location>
        <location>Chloroplast</location>
    </subcellularLocation>
</comment>
<comment type="domain">
    <text evidence="1">The N-terminal domain is essential for RNAP assembly and basal transcription, whereas the C-terminal domain is involved in interaction with transcriptional regulators and with upstream promoter elements.</text>
</comment>
<comment type="similarity">
    <text evidence="1">Belongs to the RNA polymerase alpha chain family.</text>
</comment>
<evidence type="ECO:0000255" key="1">
    <source>
        <dbReference type="HAMAP-Rule" id="MF_00059"/>
    </source>
</evidence>
<organism>
    <name type="scientific">Saccharum officinarum</name>
    <name type="common">Sugarcane</name>
    <dbReference type="NCBI Taxonomy" id="4547"/>
    <lineage>
        <taxon>Eukaryota</taxon>
        <taxon>Viridiplantae</taxon>
        <taxon>Streptophyta</taxon>
        <taxon>Embryophyta</taxon>
        <taxon>Tracheophyta</taxon>
        <taxon>Spermatophyta</taxon>
        <taxon>Magnoliopsida</taxon>
        <taxon>Liliopsida</taxon>
        <taxon>Poales</taxon>
        <taxon>Poaceae</taxon>
        <taxon>PACMAD clade</taxon>
        <taxon>Panicoideae</taxon>
        <taxon>Andropogonodae</taxon>
        <taxon>Andropogoneae</taxon>
        <taxon>Saccharinae</taxon>
        <taxon>Saccharum</taxon>
        <taxon>Saccharum officinarum species complex</taxon>
    </lineage>
</organism>
<protein>
    <recommendedName>
        <fullName evidence="1">DNA-directed RNA polymerase subunit alpha</fullName>
        <shortName evidence="1">PEP</shortName>
        <ecNumber evidence="1">2.7.7.6</ecNumber>
    </recommendedName>
    <alternativeName>
        <fullName evidence="1">Plastid-encoded RNA polymerase subunit alpha</fullName>
        <shortName evidence="1">RNA polymerase subunit alpha</shortName>
    </alternativeName>
</protein>